<accession>P77378</accession>
<organism>
    <name type="scientific">Escherichia coli (strain K12)</name>
    <dbReference type="NCBI Taxonomy" id="83333"/>
    <lineage>
        <taxon>Bacteria</taxon>
        <taxon>Pseudomonadati</taxon>
        <taxon>Pseudomonadota</taxon>
        <taxon>Gammaproteobacteria</taxon>
        <taxon>Enterobacterales</taxon>
        <taxon>Enterobacteriaceae</taxon>
        <taxon>Escherichia</taxon>
    </lineage>
</organism>
<sequence>MSQLNSVWVFSDNPERYAELFGGAQQWGQQVYAIVQNTDQAQAVMPYGPKCLYVLAQNDALQRTENYAESIAALLKDKHPAMLLLAATKRGKALAARLSVQLNAALVNDATAVDIVDGHICAEHRMYGGLAFAQEKINSPLAIITLAPGVQEPCTSDTSHQCPTETVPYVAPRHEILCRERRAKAASSVDLSKAKRVVGVGRGLAAQDDLKMVHELAAVLNAEVGCSRPIAEGENWMERERYIGVSGVLLKSDLYLTLGISGQIQHMVGGNGAKVIVAINKDKNAPIFNYADYGLVGDIYKVVPALISQLSR</sequence>
<protein>
    <recommendedName>
        <fullName>Putative electron transfer flavoprotein subunit YdiR</fullName>
    </recommendedName>
</protein>
<evidence type="ECO:0000255" key="1"/>
<evidence type="ECO:0000305" key="2"/>
<feature type="chain" id="PRO_0000167869" description="Putative electron transfer flavoprotein subunit YdiR">
    <location>
        <begin position="1"/>
        <end position="312"/>
    </location>
</feature>
<feature type="binding site" evidence="1">
    <location>
        <begin position="254"/>
        <end position="282"/>
    </location>
    <ligand>
        <name>FAD</name>
        <dbReference type="ChEBI" id="CHEBI:57692"/>
    </ligand>
</feature>
<dbReference type="EMBL" id="U00096">
    <property type="protein sequence ID" value="AAC74768.1"/>
    <property type="molecule type" value="Genomic_DNA"/>
</dbReference>
<dbReference type="EMBL" id="AP009048">
    <property type="protein sequence ID" value="BAA15467.1"/>
    <property type="molecule type" value="Genomic_DNA"/>
</dbReference>
<dbReference type="PIR" id="B64928">
    <property type="entry name" value="B64928"/>
</dbReference>
<dbReference type="RefSeq" id="NP_416213.1">
    <property type="nucleotide sequence ID" value="NC_000913.3"/>
</dbReference>
<dbReference type="RefSeq" id="WP_000080722.1">
    <property type="nucleotide sequence ID" value="NZ_SSZK01000001.1"/>
</dbReference>
<dbReference type="SMR" id="P77378"/>
<dbReference type="BioGRID" id="4260293">
    <property type="interactions" value="15"/>
</dbReference>
<dbReference type="BioGRID" id="850060">
    <property type="interactions" value="4"/>
</dbReference>
<dbReference type="FunCoup" id="P77378">
    <property type="interactions" value="630"/>
</dbReference>
<dbReference type="IntAct" id="P77378">
    <property type="interactions" value="4"/>
</dbReference>
<dbReference type="STRING" id="511145.b1698"/>
<dbReference type="PaxDb" id="511145-b1698"/>
<dbReference type="EnsemblBacteria" id="AAC74768">
    <property type="protein sequence ID" value="AAC74768"/>
    <property type="gene ID" value="b1698"/>
</dbReference>
<dbReference type="GeneID" id="945688"/>
<dbReference type="KEGG" id="ecj:JW1688"/>
<dbReference type="KEGG" id="eco:b1698"/>
<dbReference type="KEGG" id="ecoc:C3026_09725"/>
<dbReference type="PATRIC" id="fig|1411691.4.peg.559"/>
<dbReference type="EchoBASE" id="EB3734"/>
<dbReference type="eggNOG" id="COG2025">
    <property type="taxonomic scope" value="Bacteria"/>
</dbReference>
<dbReference type="HOGENOM" id="CLU_034178_0_1_6"/>
<dbReference type="InParanoid" id="P77378"/>
<dbReference type="OMA" id="GWIPYSH"/>
<dbReference type="OrthoDB" id="9770286at2"/>
<dbReference type="PhylomeDB" id="P77378"/>
<dbReference type="BioCyc" id="EcoCyc:G6921-MONOMER"/>
<dbReference type="PRO" id="PR:P77378"/>
<dbReference type="Proteomes" id="UP000000625">
    <property type="component" value="Chromosome"/>
</dbReference>
<dbReference type="GO" id="GO:0009055">
    <property type="term" value="F:electron transfer activity"/>
    <property type="evidence" value="ECO:0000318"/>
    <property type="project" value="GO_Central"/>
</dbReference>
<dbReference type="GO" id="GO:0050660">
    <property type="term" value="F:flavin adenine dinucleotide binding"/>
    <property type="evidence" value="ECO:0000318"/>
    <property type="project" value="GO_Central"/>
</dbReference>
<dbReference type="GO" id="GO:0033539">
    <property type="term" value="P:fatty acid beta-oxidation using acyl-CoA dehydrogenase"/>
    <property type="evidence" value="ECO:0000318"/>
    <property type="project" value="GO_Central"/>
</dbReference>
<dbReference type="FunFam" id="3.40.50.1220:FF:000004">
    <property type="entry name" value="Electron transfer flavoprotein"/>
    <property type="match status" value="1"/>
</dbReference>
<dbReference type="Gene3D" id="3.40.50.620">
    <property type="entry name" value="HUPs"/>
    <property type="match status" value="1"/>
</dbReference>
<dbReference type="Gene3D" id="3.40.50.1220">
    <property type="entry name" value="TPP-binding domain"/>
    <property type="match status" value="1"/>
</dbReference>
<dbReference type="InterPro" id="IPR029035">
    <property type="entry name" value="DHS-like_NAD/FAD-binding_dom"/>
</dbReference>
<dbReference type="InterPro" id="IPR014730">
    <property type="entry name" value="ETF_a/b_N"/>
</dbReference>
<dbReference type="InterPro" id="IPR001308">
    <property type="entry name" value="ETF_a/FixB"/>
</dbReference>
<dbReference type="InterPro" id="IPR014731">
    <property type="entry name" value="ETF_asu_C"/>
</dbReference>
<dbReference type="InterPro" id="IPR018206">
    <property type="entry name" value="ETF_asu_C_CS"/>
</dbReference>
<dbReference type="InterPro" id="IPR014729">
    <property type="entry name" value="Rossmann-like_a/b/a_fold"/>
</dbReference>
<dbReference type="NCBIfam" id="NF008884">
    <property type="entry name" value="PRK11916.1"/>
    <property type="match status" value="1"/>
</dbReference>
<dbReference type="PANTHER" id="PTHR43153">
    <property type="entry name" value="ELECTRON TRANSFER FLAVOPROTEIN ALPHA"/>
    <property type="match status" value="1"/>
</dbReference>
<dbReference type="PANTHER" id="PTHR43153:SF1">
    <property type="entry name" value="ELECTRON TRANSFER FLAVOPROTEIN SUBUNIT ALPHA, MITOCHONDRIAL"/>
    <property type="match status" value="1"/>
</dbReference>
<dbReference type="Pfam" id="PF01012">
    <property type="entry name" value="ETF"/>
    <property type="match status" value="1"/>
</dbReference>
<dbReference type="Pfam" id="PF00766">
    <property type="entry name" value="ETF_alpha"/>
    <property type="match status" value="1"/>
</dbReference>
<dbReference type="PIRSF" id="PIRSF000089">
    <property type="entry name" value="Electra_flavoP_a"/>
    <property type="match status" value="1"/>
</dbReference>
<dbReference type="SMART" id="SM00893">
    <property type="entry name" value="ETF"/>
    <property type="match status" value="1"/>
</dbReference>
<dbReference type="SUPFAM" id="SSF52402">
    <property type="entry name" value="Adenine nucleotide alpha hydrolases-like"/>
    <property type="match status" value="1"/>
</dbReference>
<dbReference type="SUPFAM" id="SSF52467">
    <property type="entry name" value="DHS-like NAD/FAD-binding domain"/>
    <property type="match status" value="1"/>
</dbReference>
<dbReference type="PROSITE" id="PS00696">
    <property type="entry name" value="ETF_ALPHA"/>
    <property type="match status" value="1"/>
</dbReference>
<keyword id="KW-0249">Electron transport</keyword>
<keyword id="KW-0274">FAD</keyword>
<keyword id="KW-0285">Flavoprotein</keyword>
<keyword id="KW-1185">Reference proteome</keyword>
<keyword id="KW-0813">Transport</keyword>
<gene>
    <name type="primary">ydiR</name>
    <name type="ordered locus">b1698</name>
    <name type="ordered locus">JW1688</name>
</gene>
<comment type="function">
    <text>May play a role in a redox process.</text>
</comment>
<comment type="subunit">
    <text evidence="2">YdiR and YdiQ form a heterodimer.</text>
</comment>
<comment type="similarity">
    <text evidence="2">Belongs to the ETF alpha-subunit/FixB family.</text>
</comment>
<name>YDIR_ECOLI</name>
<proteinExistence type="inferred from homology"/>
<reference key="1">
    <citation type="journal article" date="1996" name="DNA Res.">
        <title>A 570-kb DNA sequence of the Escherichia coli K-12 genome corresponding to the 28.0-40.1 min region on the linkage map.</title>
        <authorList>
            <person name="Aiba H."/>
            <person name="Baba T."/>
            <person name="Fujita K."/>
            <person name="Hayashi K."/>
            <person name="Inada T."/>
            <person name="Isono K."/>
            <person name="Itoh T."/>
            <person name="Kasai H."/>
            <person name="Kashimoto K."/>
            <person name="Kimura S."/>
            <person name="Kitakawa M."/>
            <person name="Kitagawa M."/>
            <person name="Makino K."/>
            <person name="Miki T."/>
            <person name="Mizobuchi K."/>
            <person name="Mori H."/>
            <person name="Mori T."/>
            <person name="Motomura K."/>
            <person name="Nakade S."/>
            <person name="Nakamura Y."/>
            <person name="Nashimoto H."/>
            <person name="Nishio Y."/>
            <person name="Oshima T."/>
            <person name="Saito N."/>
            <person name="Sampei G."/>
            <person name="Seki Y."/>
            <person name="Sivasundaram S."/>
            <person name="Tagami H."/>
            <person name="Takeda J."/>
            <person name="Takemoto K."/>
            <person name="Takeuchi Y."/>
            <person name="Wada C."/>
            <person name="Yamamoto Y."/>
            <person name="Horiuchi T."/>
        </authorList>
    </citation>
    <scope>NUCLEOTIDE SEQUENCE [LARGE SCALE GENOMIC DNA]</scope>
    <source>
        <strain>K12 / W3110 / ATCC 27325 / DSM 5911</strain>
    </source>
</reference>
<reference key="2">
    <citation type="journal article" date="1997" name="Science">
        <title>The complete genome sequence of Escherichia coli K-12.</title>
        <authorList>
            <person name="Blattner F.R."/>
            <person name="Plunkett G. III"/>
            <person name="Bloch C.A."/>
            <person name="Perna N.T."/>
            <person name="Burland V."/>
            <person name="Riley M."/>
            <person name="Collado-Vides J."/>
            <person name="Glasner J.D."/>
            <person name="Rode C.K."/>
            <person name="Mayhew G.F."/>
            <person name="Gregor J."/>
            <person name="Davis N.W."/>
            <person name="Kirkpatrick H.A."/>
            <person name="Goeden M.A."/>
            <person name="Rose D.J."/>
            <person name="Mau B."/>
            <person name="Shao Y."/>
        </authorList>
    </citation>
    <scope>NUCLEOTIDE SEQUENCE [LARGE SCALE GENOMIC DNA]</scope>
    <source>
        <strain>K12 / MG1655 / ATCC 47076</strain>
    </source>
</reference>
<reference key="3">
    <citation type="journal article" date="2006" name="Mol. Syst. Biol.">
        <title>Highly accurate genome sequences of Escherichia coli K-12 strains MG1655 and W3110.</title>
        <authorList>
            <person name="Hayashi K."/>
            <person name="Morooka N."/>
            <person name="Yamamoto Y."/>
            <person name="Fujita K."/>
            <person name="Isono K."/>
            <person name="Choi S."/>
            <person name="Ohtsubo E."/>
            <person name="Baba T."/>
            <person name="Wanner B.L."/>
            <person name="Mori H."/>
            <person name="Horiuchi T."/>
        </authorList>
    </citation>
    <scope>NUCLEOTIDE SEQUENCE [LARGE SCALE GENOMIC DNA]</scope>
    <source>
        <strain>K12 / W3110 / ATCC 27325 / DSM 5911</strain>
    </source>
</reference>